<accession>L7XAV2</accession>
<dbReference type="EC" id="2.3.1.-" evidence="9"/>
<dbReference type="EMBL" id="JX971534">
    <property type="protein sequence ID" value="AGC95321.1"/>
    <property type="molecule type" value="Genomic_DNA"/>
</dbReference>
<dbReference type="SMR" id="L7XAV2"/>
<dbReference type="ESTHER" id="aspte-curs2">
    <property type="family name" value="Thioesterase"/>
</dbReference>
<dbReference type="VEuPathDB" id="FungiDB:ATEG_00145"/>
<dbReference type="GO" id="GO:0004315">
    <property type="term" value="F:3-oxoacyl-[acyl-carrier-protein] synthase activity"/>
    <property type="evidence" value="ECO:0007669"/>
    <property type="project" value="InterPro"/>
</dbReference>
<dbReference type="GO" id="GO:0004312">
    <property type="term" value="F:fatty acid synthase activity"/>
    <property type="evidence" value="ECO:0007669"/>
    <property type="project" value="TreeGrafter"/>
</dbReference>
<dbReference type="GO" id="GO:0031177">
    <property type="term" value="F:phosphopantetheine binding"/>
    <property type="evidence" value="ECO:0007669"/>
    <property type="project" value="InterPro"/>
</dbReference>
<dbReference type="GO" id="GO:0006633">
    <property type="term" value="P:fatty acid biosynthetic process"/>
    <property type="evidence" value="ECO:0007669"/>
    <property type="project" value="InterPro"/>
</dbReference>
<dbReference type="GO" id="GO:0044550">
    <property type="term" value="P:secondary metabolite biosynthetic process"/>
    <property type="evidence" value="ECO:0007669"/>
    <property type="project" value="TreeGrafter"/>
</dbReference>
<dbReference type="CDD" id="cd00833">
    <property type="entry name" value="PKS"/>
    <property type="match status" value="1"/>
</dbReference>
<dbReference type="Gene3D" id="3.30.70.3290">
    <property type="match status" value="1"/>
</dbReference>
<dbReference type="Gene3D" id="3.40.47.10">
    <property type="match status" value="1"/>
</dbReference>
<dbReference type="Gene3D" id="1.10.1200.10">
    <property type="entry name" value="ACP-like"/>
    <property type="match status" value="1"/>
</dbReference>
<dbReference type="Gene3D" id="3.40.50.1820">
    <property type="entry name" value="alpha/beta hydrolase"/>
    <property type="match status" value="1"/>
</dbReference>
<dbReference type="Gene3D" id="3.30.70.250">
    <property type="entry name" value="Malonyl-CoA ACP transacylase, ACP-binding"/>
    <property type="match status" value="1"/>
</dbReference>
<dbReference type="Gene3D" id="3.40.366.10">
    <property type="entry name" value="Malonyl-Coenzyme A Acyl Carrier Protein, domain 2"/>
    <property type="match status" value="1"/>
</dbReference>
<dbReference type="Gene3D" id="3.10.129.110">
    <property type="entry name" value="Polyketide synthase dehydratase"/>
    <property type="match status" value="1"/>
</dbReference>
<dbReference type="InterPro" id="IPR029058">
    <property type="entry name" value="AB_hydrolase_fold"/>
</dbReference>
<dbReference type="InterPro" id="IPR001227">
    <property type="entry name" value="Ac_transferase_dom_sf"/>
</dbReference>
<dbReference type="InterPro" id="IPR036736">
    <property type="entry name" value="ACP-like_sf"/>
</dbReference>
<dbReference type="InterPro" id="IPR014043">
    <property type="entry name" value="Acyl_transferase_dom"/>
</dbReference>
<dbReference type="InterPro" id="IPR016035">
    <property type="entry name" value="Acyl_Trfase/lysoPLipase"/>
</dbReference>
<dbReference type="InterPro" id="IPR018201">
    <property type="entry name" value="Ketoacyl_synth_AS"/>
</dbReference>
<dbReference type="InterPro" id="IPR014031">
    <property type="entry name" value="Ketoacyl_synth_C"/>
</dbReference>
<dbReference type="InterPro" id="IPR014030">
    <property type="entry name" value="Ketoacyl_synth_N"/>
</dbReference>
<dbReference type="InterPro" id="IPR016036">
    <property type="entry name" value="Malonyl_transacylase_ACP-bd"/>
</dbReference>
<dbReference type="InterPro" id="IPR020841">
    <property type="entry name" value="PKS_Beta-ketoAc_synthase_dom"/>
</dbReference>
<dbReference type="InterPro" id="IPR042104">
    <property type="entry name" value="PKS_dehydratase_sf"/>
</dbReference>
<dbReference type="InterPro" id="IPR049900">
    <property type="entry name" value="PKS_mFAS_DH"/>
</dbReference>
<dbReference type="InterPro" id="IPR050091">
    <property type="entry name" value="PKS_NRPS_Biosynth_Enz"/>
</dbReference>
<dbReference type="InterPro" id="IPR020806">
    <property type="entry name" value="PKS_PP-bd"/>
</dbReference>
<dbReference type="InterPro" id="IPR009081">
    <property type="entry name" value="PP-bd_ACP"/>
</dbReference>
<dbReference type="InterPro" id="IPR006162">
    <property type="entry name" value="Ppantetheine_attach_site"/>
</dbReference>
<dbReference type="InterPro" id="IPR030918">
    <property type="entry name" value="PT_fungal_PKS"/>
</dbReference>
<dbReference type="InterPro" id="IPR032088">
    <property type="entry name" value="SAT"/>
</dbReference>
<dbReference type="InterPro" id="IPR001031">
    <property type="entry name" value="Thioesterase"/>
</dbReference>
<dbReference type="InterPro" id="IPR016039">
    <property type="entry name" value="Thiolase-like"/>
</dbReference>
<dbReference type="NCBIfam" id="TIGR04532">
    <property type="entry name" value="PT_fungal_PKS"/>
    <property type="match status" value="1"/>
</dbReference>
<dbReference type="PANTHER" id="PTHR43775">
    <property type="entry name" value="FATTY ACID SYNTHASE"/>
    <property type="match status" value="1"/>
</dbReference>
<dbReference type="PANTHER" id="PTHR43775:SF37">
    <property type="entry name" value="SI:DKEY-61P9.11"/>
    <property type="match status" value="1"/>
</dbReference>
<dbReference type="Pfam" id="PF00698">
    <property type="entry name" value="Acyl_transf_1"/>
    <property type="match status" value="1"/>
</dbReference>
<dbReference type="Pfam" id="PF22621">
    <property type="entry name" value="CurL-like_PKS_C"/>
    <property type="match status" value="1"/>
</dbReference>
<dbReference type="Pfam" id="PF00109">
    <property type="entry name" value="ketoacyl-synt"/>
    <property type="match status" value="1"/>
</dbReference>
<dbReference type="Pfam" id="PF02801">
    <property type="entry name" value="Ketoacyl-synt_C"/>
    <property type="match status" value="1"/>
</dbReference>
<dbReference type="Pfam" id="PF00550">
    <property type="entry name" value="PP-binding"/>
    <property type="match status" value="1"/>
</dbReference>
<dbReference type="Pfam" id="PF16073">
    <property type="entry name" value="SAT"/>
    <property type="match status" value="1"/>
</dbReference>
<dbReference type="Pfam" id="PF00975">
    <property type="entry name" value="Thioesterase"/>
    <property type="match status" value="1"/>
</dbReference>
<dbReference type="SMART" id="SM00827">
    <property type="entry name" value="PKS_AT"/>
    <property type="match status" value="1"/>
</dbReference>
<dbReference type="SMART" id="SM00825">
    <property type="entry name" value="PKS_KS"/>
    <property type="match status" value="1"/>
</dbReference>
<dbReference type="SMART" id="SM00823">
    <property type="entry name" value="PKS_PP"/>
    <property type="match status" value="1"/>
</dbReference>
<dbReference type="SMART" id="SM01294">
    <property type="entry name" value="PKS_PP_betabranch"/>
    <property type="match status" value="1"/>
</dbReference>
<dbReference type="SUPFAM" id="SSF47336">
    <property type="entry name" value="ACP-like"/>
    <property type="match status" value="1"/>
</dbReference>
<dbReference type="SUPFAM" id="SSF53474">
    <property type="entry name" value="alpha/beta-Hydrolases"/>
    <property type="match status" value="1"/>
</dbReference>
<dbReference type="SUPFAM" id="SSF52151">
    <property type="entry name" value="FabD/lysophospholipase-like"/>
    <property type="match status" value="1"/>
</dbReference>
<dbReference type="SUPFAM" id="SSF55048">
    <property type="entry name" value="Probable ACP-binding domain of malonyl-CoA ACP transacylase"/>
    <property type="match status" value="1"/>
</dbReference>
<dbReference type="SUPFAM" id="SSF53901">
    <property type="entry name" value="Thiolase-like"/>
    <property type="match status" value="1"/>
</dbReference>
<dbReference type="PROSITE" id="PS50075">
    <property type="entry name" value="CARRIER"/>
    <property type="match status" value="1"/>
</dbReference>
<dbReference type="PROSITE" id="PS00606">
    <property type="entry name" value="KS3_1"/>
    <property type="match status" value="1"/>
</dbReference>
<dbReference type="PROSITE" id="PS52004">
    <property type="entry name" value="KS3_2"/>
    <property type="match status" value="1"/>
</dbReference>
<dbReference type="PROSITE" id="PS00012">
    <property type="entry name" value="PHOSPHOPANTETHEINE"/>
    <property type="match status" value="1"/>
</dbReference>
<dbReference type="PROSITE" id="PS52019">
    <property type="entry name" value="PKS_MFAS_DH"/>
    <property type="match status" value="1"/>
</dbReference>
<evidence type="ECO:0000250" key="1">
    <source>
        <dbReference type="UniProtKB" id="Q5ATJ7"/>
    </source>
</evidence>
<evidence type="ECO:0000250" key="2">
    <source>
        <dbReference type="UniProtKB" id="Q5B0D0"/>
    </source>
</evidence>
<evidence type="ECO:0000255" key="3"/>
<evidence type="ECO:0000255" key="4">
    <source>
        <dbReference type="PROSITE-ProRule" id="PRU00258"/>
    </source>
</evidence>
<evidence type="ECO:0000255" key="5">
    <source>
        <dbReference type="PROSITE-ProRule" id="PRU01348"/>
    </source>
</evidence>
<evidence type="ECO:0000255" key="6">
    <source>
        <dbReference type="PROSITE-ProRule" id="PRU01363"/>
    </source>
</evidence>
<evidence type="ECO:0000255" key="7">
    <source>
        <dbReference type="PROSITE-ProRule" id="PRU10022"/>
    </source>
</evidence>
<evidence type="ECO:0000256" key="8">
    <source>
        <dbReference type="SAM" id="MobiDB-lite"/>
    </source>
</evidence>
<evidence type="ECO:0000269" key="9">
    <source>
    </source>
</evidence>
<evidence type="ECO:0000303" key="10">
    <source>
    </source>
</evidence>
<evidence type="ECO:0000305" key="11">
    <source>
    </source>
</evidence>
<evidence type="ECO:0000305" key="12">
    <source>
    </source>
</evidence>
<keyword id="KW-0511">Multifunctional enzyme</keyword>
<keyword id="KW-0596">Phosphopantetheine</keyword>
<keyword id="KW-0597">Phosphoprotein</keyword>
<keyword id="KW-0808">Transferase</keyword>
<comment type="function">
    <text evidence="9 12">Non-reducing polyketide synthase; part of the gene cluster that mediates the biosynthesis of 10,11-dehydrocurvularin, a prevalent fungal phytotoxin with heat shock response and immune-modulatory activities (PubMed:23335766, PubMed:26493380). The highly reducing polyketide synthase curS1 is responsible for biosynthesis up to the tetraketide stage (PubMed:23335766). The non-reducing polyketide synthase curS2 then conducts four additional chain extension cycles, producing the unreduced part of the nascent octaketide from C-1 to C-8 in 10,11-dehydrocurvularin (PubMed:23335766).</text>
</comment>
<comment type="pathway">
    <text evidence="9">Mycotoxin biosynthesis.</text>
</comment>
<comment type="domain">
    <text evidence="2">Multidomain protein; including a starter unit:ACP transacylase (SAT) that selects the starter unit; a ketosynthase (KS) that catalyzes repeated decarboxylative condensation to elongate the polyketide backbone; a malonyl-CoA:ACP transacylase (MAT) that selects and transfers the extender unit malonyl-CoA; a product template (PT) domain that controls the immediate cyclization regioselectivity of the reactive polyketide backbone; and an acyl-carrier protein (ACP) that serves as the tether of the growing and completed polyketide via its phosphopantetheinyl arm (By similarity).</text>
</comment>
<comment type="domain">
    <text evidence="1">The release of the polyketide chain from the non-reducing polyketide synthase is mediated by the thioesterase (TE) domain localized at the C-ter of the protein (By similarity).</text>
</comment>
<organism>
    <name type="scientific">Aspergillus terreus</name>
    <dbReference type="NCBI Taxonomy" id="33178"/>
    <lineage>
        <taxon>Eukaryota</taxon>
        <taxon>Fungi</taxon>
        <taxon>Dikarya</taxon>
        <taxon>Ascomycota</taxon>
        <taxon>Pezizomycotina</taxon>
        <taxon>Eurotiomycetes</taxon>
        <taxon>Eurotiomycetidae</taxon>
        <taxon>Eurotiales</taxon>
        <taxon>Aspergillaceae</taxon>
        <taxon>Aspergillus</taxon>
        <taxon>Aspergillus subgen. Circumdati</taxon>
    </lineage>
</organism>
<name>CURS2_ASPTE</name>
<gene>
    <name evidence="10" type="primary">curS2</name>
</gene>
<proteinExistence type="evidence at protein level"/>
<feature type="chain" id="PRO_0000438388" description="Non-reducing polyketide synthase curS2">
    <location>
        <begin position="1"/>
        <end position="2083"/>
    </location>
</feature>
<feature type="domain" description="Ketosynthase family 3 (KS3)" evidence="5 11 12">
    <location>
        <begin position="366"/>
        <end position="798"/>
    </location>
</feature>
<feature type="domain" description="PKS/mFAS DH" evidence="6">
    <location>
        <begin position="1276"/>
        <end position="1585"/>
    </location>
</feature>
<feature type="domain" description="Carrier" evidence="4">
    <location>
        <begin position="1637"/>
        <end position="1714"/>
    </location>
</feature>
<feature type="region of interest" description="N-terminal acylcarrier protein transacylase domain (SAT)" evidence="3 11 12">
    <location>
        <begin position="9"/>
        <end position="246"/>
    </location>
</feature>
<feature type="region of interest" description="Malonyl-CoA:ACP transacylase (MAT) domain" evidence="3 11 12">
    <location>
        <begin position="895"/>
        <end position="1201"/>
    </location>
</feature>
<feature type="region of interest" description="N-terminal hotdog fold" evidence="6">
    <location>
        <begin position="1276"/>
        <end position="1415"/>
    </location>
</feature>
<feature type="region of interest" description="Product template (PT) domain" evidence="3 11 12">
    <location>
        <begin position="1285"/>
        <end position="1581"/>
    </location>
</feature>
<feature type="region of interest" description="C-terminal hotdog fold" evidence="6">
    <location>
        <begin position="1437"/>
        <end position="1585"/>
    </location>
</feature>
<feature type="region of interest" description="Disordered" evidence="8">
    <location>
        <begin position="1710"/>
        <end position="1790"/>
    </location>
</feature>
<feature type="region of interest" description="Thioesterase (TE) domain" evidence="3 11 12">
    <location>
        <begin position="1811"/>
        <end position="2058"/>
    </location>
</feature>
<feature type="compositionally biased region" description="Low complexity" evidence="8">
    <location>
        <begin position="1718"/>
        <end position="1736"/>
    </location>
</feature>
<feature type="compositionally biased region" description="Polar residues" evidence="8">
    <location>
        <begin position="1745"/>
        <end position="1754"/>
    </location>
</feature>
<feature type="compositionally biased region" description="Basic and acidic residues" evidence="8">
    <location>
        <begin position="1771"/>
        <end position="1784"/>
    </location>
</feature>
<feature type="active site" description="For beta-ketoacyl synthase activity" evidence="5">
    <location>
        <position position="543"/>
    </location>
</feature>
<feature type="active site" description="For beta-ketoacyl synthase activity" evidence="5">
    <location>
        <position position="678"/>
    </location>
</feature>
<feature type="active site" description="For beta-ketoacyl synthase activity" evidence="5">
    <location>
        <position position="717"/>
    </location>
</feature>
<feature type="active site" description="For acyl/malonyl transferase activity" evidence="7">
    <location>
        <position position="986"/>
    </location>
</feature>
<feature type="active site" description="For thioesterase activity" evidence="1">
    <location>
        <position position="2065"/>
    </location>
</feature>
<feature type="modified residue" description="O-(pantetheine 4'-phosphoryl)serine" evidence="4">
    <location>
        <position position="1674"/>
    </location>
</feature>
<reference key="1">
    <citation type="journal article" date="2013" name="Appl. Environ. Microbiol.">
        <title>Characterization of the biosynthetic genes for 10,11-dehydrocurvularin, a heat shock response-modulating anticancer fungal polyketide from Aspergillus terreus.</title>
        <authorList>
            <person name="Xu Y."/>
            <person name="Espinosa-Artiles P."/>
            <person name="Schubert V."/>
            <person name="Xu Y.M."/>
            <person name="Zhang W."/>
            <person name="Lin M."/>
            <person name="Gunatilaka A.A."/>
            <person name="Sussmuth R."/>
            <person name="Molnar I."/>
        </authorList>
    </citation>
    <scope>NUCLEOTIDE SEQUENCE [GENOMIC DNA]</scope>
    <scope>FUNCTION</scope>
    <scope>CATALYTIC ACTIVITY</scope>
    <scope>PATHWAY</scope>
    <source>
        <strain>AH-02-30-F7</strain>
    </source>
</reference>
<reference key="2">
    <citation type="journal article" date="2015" name="ChemBioChem">
        <title>Comparison of 10,11-dehydrocurvularin polyketide synthases from Alternaria cinerariae and Aspergillus terreus highlights key structural motifs.</title>
        <authorList>
            <person name="Cochrane R.V."/>
            <person name="Gao Z."/>
            <person name="Lambkin G.R."/>
            <person name="Xu W."/>
            <person name="Winter J.M."/>
            <person name="Marcus S.L."/>
            <person name="Tang Y."/>
            <person name="Vederas J.C."/>
        </authorList>
    </citation>
    <scope>FUNCTION</scope>
    <scope>DOMAIN</scope>
</reference>
<protein>
    <recommendedName>
        <fullName evidence="10">Non-reducing polyketide synthase curS2</fullName>
        <ecNumber evidence="9">2.3.1.-</ecNumber>
    </recommendedName>
    <alternativeName>
        <fullName evidence="10">Dehydrocurvularin biosynthesis protein 2</fullName>
    </alternativeName>
</protein>
<sequence>MDSNRPAVLLFGDVTDPWVDGIDYVYSQAATTPWLRSFLRDLFTVLKVEMRTMDRTLQESFRDCGSFQELAERYRHTGDDFGMAHAMLTYVIRAVVLLETISAEPHLLDSNRPRPELIGVSGGLFSAAVVSVSTNFQSLYDTCLEAGRVWARLCNLTLVKSRAIEERPGTWGWAVLGIPAGKLSQTLEQFQNDMGVPSAKRARVGVTGDRWSTVIGPPSILELVLNECPTLKNLPKNELDIHALQHTLDISNADIDYIVGDSSLLDTPLPQGYRIYGLDDDRPEATYPSWSHLLRASASQTLARPLNIVQAVSKLNAALGTSTHVDFKIMGPSSHAAYIAKVLQTAGREVSLQDRITAKPPTPDSRDGIAIVGMAGKGPGSDDLEEFWDVLLKGLDLHQEVPPDRYDLDEYYSPKHPPAGPGKCTMTCRHGCFMNNPGHFDSKFFHISPREALLMDPAHRLFLMNAYEALEMAGYSDGQTKMTDPTKIATFFGQCNDDWHVVGHRTLGCDAYTLQAVQRAFGPGRLAFQFNWEGPTYALDSACAATSSCIHLACMSLIARDIDMAVAGAANVLSTPHSFTSLSRSGVLSDSGNCKTYRDDADGYCRADFSGAVVLKRLDDAIAHNDNILAVISSSARNHSGNSTSITTSDAAAQERLFHKVLRNARVTPEDISYVEMHGTGTQVGDKAEMGAVSSVFSKRRDGELLPVGAIKANLGHSEAAAGMSSLLKSILMFQKGTIPPQAGMPHTLNPNFPPLHEINIKIPEEPLEFKSVGGKPRRILLNNFDAAGGNACLLLEDYTHTKEREADVRSAHTIVTSARTQASHLLNKQRLLKWLRSNPNTRIEDLAYTTTARRMHHPIRFALTASTTQEAISKLESEIERNTNSPASRHVPVVFVFTGQGSHYAGMGAELYRTSSAFRERVDLCVDICAGNNFAPFVDIITDEGVDVSSKTAAQVQLAVLTLEMALTHFWRLAGIEPAMVMGHSLGEYAALHAAGVLSLADALYLVGHRALILQERCESGSCSMLSVSTSVANVREQLSQLQSSSCGVACINSPSSTVVSGIAEDLAEFQANITAQDAKVRTKTLSIPFAFHSFQMDPILQDYGTIAAGVTFSAPKIPVASTLLGSIVGEPGVFDHDYLVQQTRQPVNFVGGLNAVQSKLSDPLWLEIGPSPVCVSFVRDTLSPSLSKLTHTLQPNTHNWASISKSLAAAYINGVDIDWVALHAPYETNLQLLTLPSYAWDVKDYWITHTDRVTEAVPEQSPVTGSGPLVSTCAQYLVSKSSSPKVQVVFRASISDPGFMELIDGHKMQGIGLCSGSVFCEAAFAAAKYALEYSGRRNVTQPWLTLQKPELLLPLTKKLAGADGSLITTAVMDSPSAHRISVTFKLTSGSESHELGSCIVNFRDPAKTQADWDRVSYFIQARMDEVIKNAKEGPGHRMQPEVFYALFANAVEFSTDFQGVDEAYIAKDFQEAAALVTLPHDPAGTKFTFSPYWGEALVHLAGFMVNGNPSKSPQKTFIVMGFESVEQTVPLVPGKKYMAYTRISKWVKETAYCDAVVFDPETSNIILQCIDLRYQELPRVTWKHVLDGPHGGSSAHGHKAPVQETKKAVEVSRQAVAVAPVQPQPAEVGEDDDDDFDEGLVDAILDSISKATGSDPSEFTDDTIVADLGVDSIMAIEVVATVKEQSGLDLPATFVLEHPTIGDLRRAFGANKPKTSKPQPGSTTPSSSQSSIPSSPNPEPTSMSDTASSLGSSLVDIEKDQTFTPPPELEPKPNHHLGKMDETDTSPAPTVRITLLQGRPSPKRTPFYMMADGTGTIATYIHLPAFKSKMPVYGIDSPFLRCPSRLTKDVGIPGVAKLIVDALVTAQPTGPLMIGGFSAGSIVAYEVTRQLGALGRQVTGLVLIDMCCPRSSLLDEDAMNSEDDASFAIFENAVSKDGLWSLASTTQDHFRAYHVAMHAYHPPYMTAQERPSHTAVIWAEKGMVNRVVGNDRLMQMLADQGIPTTSYPGYMEDPRLGAFACLVPDRTAADLGPNGWEKYTAGEVLALSVAGDHLDLPMPGHVHLLQREMEKAFAYFEGEST</sequence>